<gene>
    <name evidence="1" type="primary">minE</name>
    <name type="ordered locus">Shew185_1893</name>
</gene>
<accession>A6WMJ7</accession>
<name>MINE_SHEB8</name>
<evidence type="ECO:0000255" key="1">
    <source>
        <dbReference type="HAMAP-Rule" id="MF_00262"/>
    </source>
</evidence>
<comment type="function">
    <text evidence="1">Prevents the cell division inhibition by proteins MinC and MinD at internal division sites while permitting inhibition at polar sites. This ensures cell division at the proper site by restricting the formation of a division septum at the midpoint of the long axis of the cell.</text>
</comment>
<comment type="similarity">
    <text evidence="1">Belongs to the MinE family.</text>
</comment>
<keyword id="KW-0131">Cell cycle</keyword>
<keyword id="KW-0132">Cell division</keyword>
<reference key="1">
    <citation type="submission" date="2007-07" db="EMBL/GenBank/DDBJ databases">
        <title>Complete sequence of chromosome of Shewanella baltica OS185.</title>
        <authorList>
            <consortium name="US DOE Joint Genome Institute"/>
            <person name="Copeland A."/>
            <person name="Lucas S."/>
            <person name="Lapidus A."/>
            <person name="Barry K."/>
            <person name="Glavina del Rio T."/>
            <person name="Dalin E."/>
            <person name="Tice H."/>
            <person name="Pitluck S."/>
            <person name="Sims D."/>
            <person name="Brettin T."/>
            <person name="Bruce D."/>
            <person name="Detter J.C."/>
            <person name="Han C."/>
            <person name="Schmutz J."/>
            <person name="Larimer F."/>
            <person name="Land M."/>
            <person name="Hauser L."/>
            <person name="Kyrpides N."/>
            <person name="Mikhailova N."/>
            <person name="Brettar I."/>
            <person name="Rodrigues J."/>
            <person name="Konstantinidis K."/>
            <person name="Tiedje J."/>
            <person name="Richardson P."/>
        </authorList>
    </citation>
    <scope>NUCLEOTIDE SEQUENCE [LARGE SCALE GENOMIC DNA]</scope>
    <source>
        <strain>OS185</strain>
    </source>
</reference>
<dbReference type="EMBL" id="CP000753">
    <property type="protein sequence ID" value="ABS08036.1"/>
    <property type="molecule type" value="Genomic_DNA"/>
</dbReference>
<dbReference type="RefSeq" id="WP_006081361.1">
    <property type="nucleotide sequence ID" value="NC_009665.1"/>
</dbReference>
<dbReference type="SMR" id="A6WMJ7"/>
<dbReference type="GeneID" id="11772106"/>
<dbReference type="KEGG" id="sbm:Shew185_1893"/>
<dbReference type="HOGENOM" id="CLU_137929_2_2_6"/>
<dbReference type="GO" id="GO:0051301">
    <property type="term" value="P:cell division"/>
    <property type="evidence" value="ECO:0007669"/>
    <property type="project" value="UniProtKB-KW"/>
</dbReference>
<dbReference type="GO" id="GO:0032955">
    <property type="term" value="P:regulation of division septum assembly"/>
    <property type="evidence" value="ECO:0007669"/>
    <property type="project" value="InterPro"/>
</dbReference>
<dbReference type="FunFam" id="3.30.1070.10:FF:000001">
    <property type="entry name" value="Cell division topological specificity factor"/>
    <property type="match status" value="1"/>
</dbReference>
<dbReference type="Gene3D" id="3.30.1070.10">
    <property type="entry name" value="Cell division topological specificity factor MinE"/>
    <property type="match status" value="1"/>
</dbReference>
<dbReference type="HAMAP" id="MF_00262">
    <property type="entry name" value="MinE"/>
    <property type="match status" value="1"/>
</dbReference>
<dbReference type="InterPro" id="IPR005527">
    <property type="entry name" value="MinE"/>
</dbReference>
<dbReference type="InterPro" id="IPR036707">
    <property type="entry name" value="MinE_sf"/>
</dbReference>
<dbReference type="NCBIfam" id="TIGR01215">
    <property type="entry name" value="minE"/>
    <property type="match status" value="1"/>
</dbReference>
<dbReference type="NCBIfam" id="NF001422">
    <property type="entry name" value="PRK00296.1"/>
    <property type="match status" value="1"/>
</dbReference>
<dbReference type="Pfam" id="PF03776">
    <property type="entry name" value="MinE"/>
    <property type="match status" value="1"/>
</dbReference>
<dbReference type="SUPFAM" id="SSF55229">
    <property type="entry name" value="Cell division protein MinE topological specificity domain"/>
    <property type="match status" value="1"/>
</dbReference>
<feature type="chain" id="PRO_1000047794" description="Cell division topological specificity factor">
    <location>
        <begin position="1"/>
        <end position="85"/>
    </location>
</feature>
<proteinExistence type="inferred from homology"/>
<sequence>MSLLDYFKSKKKPSTAVMAKERLQIIVAHQRGQRDTPDYFPQMKQEIIAVIRKYVQISDDQVSVQLDQNDANLSVLELNVTLPDR</sequence>
<protein>
    <recommendedName>
        <fullName evidence="1">Cell division topological specificity factor</fullName>
    </recommendedName>
</protein>
<organism>
    <name type="scientific">Shewanella baltica (strain OS185)</name>
    <dbReference type="NCBI Taxonomy" id="402882"/>
    <lineage>
        <taxon>Bacteria</taxon>
        <taxon>Pseudomonadati</taxon>
        <taxon>Pseudomonadota</taxon>
        <taxon>Gammaproteobacteria</taxon>
        <taxon>Alteromonadales</taxon>
        <taxon>Shewanellaceae</taxon>
        <taxon>Shewanella</taxon>
    </lineage>
</organism>